<comment type="function">
    <text evidence="1">Catalyzes the condensation of the acetyl group of acetyl-CoA with 3-methyl-2-oxobutanoate (2-ketoisovalerate) to form 3-carboxy-3-hydroxy-4-methylpentanoate (2-isopropylmalate).</text>
</comment>
<comment type="catalytic activity">
    <reaction evidence="1">
        <text>3-methyl-2-oxobutanoate + acetyl-CoA + H2O = (2S)-2-isopropylmalate + CoA + H(+)</text>
        <dbReference type="Rhea" id="RHEA:21524"/>
        <dbReference type="ChEBI" id="CHEBI:1178"/>
        <dbReference type="ChEBI" id="CHEBI:11851"/>
        <dbReference type="ChEBI" id="CHEBI:15377"/>
        <dbReference type="ChEBI" id="CHEBI:15378"/>
        <dbReference type="ChEBI" id="CHEBI:57287"/>
        <dbReference type="ChEBI" id="CHEBI:57288"/>
        <dbReference type="EC" id="2.3.3.13"/>
    </reaction>
</comment>
<comment type="cofactor">
    <cofactor evidence="1">
        <name>Mn(2+)</name>
        <dbReference type="ChEBI" id="CHEBI:29035"/>
    </cofactor>
</comment>
<comment type="pathway">
    <text evidence="1">Amino-acid biosynthesis; L-leucine biosynthesis; L-leucine from 3-methyl-2-oxobutanoate: step 1/4.</text>
</comment>
<comment type="subunit">
    <text evidence="1">Homodimer.</text>
</comment>
<comment type="subcellular location">
    <subcellularLocation>
        <location evidence="1">Cytoplasm</location>
    </subcellularLocation>
</comment>
<comment type="similarity">
    <text evidence="1">Belongs to the alpha-IPM synthase/homocitrate synthase family. LeuA type 1 subfamily.</text>
</comment>
<name>LEU1_PECAS</name>
<gene>
    <name evidence="1" type="primary">leuA</name>
    <name type="ordered locus">ECA3831</name>
</gene>
<accession>Q6D0G8</accession>
<proteinExistence type="inferred from homology"/>
<organism>
    <name type="scientific">Pectobacterium atrosepticum (strain SCRI 1043 / ATCC BAA-672)</name>
    <name type="common">Erwinia carotovora subsp. atroseptica</name>
    <dbReference type="NCBI Taxonomy" id="218491"/>
    <lineage>
        <taxon>Bacteria</taxon>
        <taxon>Pseudomonadati</taxon>
        <taxon>Pseudomonadota</taxon>
        <taxon>Gammaproteobacteria</taxon>
        <taxon>Enterobacterales</taxon>
        <taxon>Pectobacteriaceae</taxon>
        <taxon>Pectobacterium</taxon>
    </lineage>
</organism>
<protein>
    <recommendedName>
        <fullName evidence="1">2-isopropylmalate synthase</fullName>
        <ecNumber evidence="1">2.3.3.13</ecNumber>
    </recommendedName>
    <alternativeName>
        <fullName evidence="1">Alpha-IPM synthase</fullName>
    </alternativeName>
    <alternativeName>
        <fullName evidence="1">Alpha-isopropylmalate synthase</fullName>
    </alternativeName>
</protein>
<sequence>MSEQVIIFDTTLRDGEQALQASLSVKEKLQIAFALERMGVDVMEVGFPVSSPGDFESVQTIARNIKNSRVCGLTRCVEKDIDVAAEALRVAEAFRIHTFIATSPMHIATKLRSTLDEVIERAIYMIKRARNYTDDVEFSCEDAGRTPIPDLCRVVEAAINAGARTINIPDTVGYTMPHEFGNIIASLYQHVPNIDKAIISVHTHDDLGLAVGNAMAAVHAGARQVEGTLNGIGERAGNCSLEEVIMAIKTRHDILNVHTNINHQEIYRTSQLVSQICNMPIPANKAVVGANAFAHSSGIHQDGVLKNRENYEIMTPESIGLKEVQLNLTSRSGRAAVKHRMEEMGYQDNDYNLDDLYSAFLKLADKKGQVFDYDLEALAFISRQQEEPEFYHLDYFSVQSGSSVMATASVKLICGEETQSEAATGNGPVDAVYQAINRITGYQVSLVKYQLTAKGQGRDALGQVDIVADYQGRRFHGVGLATDIVESSAQAMVNVLNNIKRAQQVEKEIQRLQQHNNQQQNDSKQQNSQETV</sequence>
<feature type="chain" id="PRO_1000149200" description="2-isopropylmalate synthase">
    <location>
        <begin position="1"/>
        <end position="532"/>
    </location>
</feature>
<feature type="domain" description="Pyruvate carboxyltransferase" evidence="1">
    <location>
        <begin position="5"/>
        <end position="267"/>
    </location>
</feature>
<feature type="region of interest" description="Regulatory domain" evidence="1">
    <location>
        <begin position="392"/>
        <end position="532"/>
    </location>
</feature>
<feature type="region of interest" description="Disordered" evidence="2">
    <location>
        <begin position="513"/>
        <end position="532"/>
    </location>
</feature>
<feature type="binding site" evidence="1">
    <location>
        <position position="14"/>
    </location>
    <ligand>
        <name>Mn(2+)</name>
        <dbReference type="ChEBI" id="CHEBI:29035"/>
    </ligand>
</feature>
<feature type="binding site" evidence="1">
    <location>
        <position position="202"/>
    </location>
    <ligand>
        <name>Mn(2+)</name>
        <dbReference type="ChEBI" id="CHEBI:29035"/>
    </ligand>
</feature>
<feature type="binding site" evidence="1">
    <location>
        <position position="204"/>
    </location>
    <ligand>
        <name>Mn(2+)</name>
        <dbReference type="ChEBI" id="CHEBI:29035"/>
    </ligand>
</feature>
<feature type="binding site" evidence="1">
    <location>
        <position position="238"/>
    </location>
    <ligand>
        <name>Mn(2+)</name>
        <dbReference type="ChEBI" id="CHEBI:29035"/>
    </ligand>
</feature>
<reference key="1">
    <citation type="journal article" date="2004" name="Proc. Natl. Acad. Sci. U.S.A.">
        <title>Genome sequence of the enterobacterial phytopathogen Erwinia carotovora subsp. atroseptica and characterization of virulence factors.</title>
        <authorList>
            <person name="Bell K.S."/>
            <person name="Sebaihia M."/>
            <person name="Pritchard L."/>
            <person name="Holden M.T.G."/>
            <person name="Hyman L.J."/>
            <person name="Holeva M.C."/>
            <person name="Thomson N.R."/>
            <person name="Bentley S.D."/>
            <person name="Churcher L.J.C."/>
            <person name="Mungall K."/>
            <person name="Atkin R."/>
            <person name="Bason N."/>
            <person name="Brooks K."/>
            <person name="Chillingworth T."/>
            <person name="Clark K."/>
            <person name="Doggett J."/>
            <person name="Fraser A."/>
            <person name="Hance Z."/>
            <person name="Hauser H."/>
            <person name="Jagels K."/>
            <person name="Moule S."/>
            <person name="Norbertczak H."/>
            <person name="Ormond D."/>
            <person name="Price C."/>
            <person name="Quail M.A."/>
            <person name="Sanders M."/>
            <person name="Walker D."/>
            <person name="Whitehead S."/>
            <person name="Salmond G.P.C."/>
            <person name="Birch P.R.J."/>
            <person name="Parkhill J."/>
            <person name="Toth I.K."/>
        </authorList>
    </citation>
    <scope>NUCLEOTIDE SEQUENCE [LARGE SCALE GENOMIC DNA]</scope>
    <source>
        <strain>SCRI 1043 / ATCC BAA-672</strain>
    </source>
</reference>
<evidence type="ECO:0000255" key="1">
    <source>
        <dbReference type="HAMAP-Rule" id="MF_01025"/>
    </source>
</evidence>
<evidence type="ECO:0000256" key="2">
    <source>
        <dbReference type="SAM" id="MobiDB-lite"/>
    </source>
</evidence>
<dbReference type="EC" id="2.3.3.13" evidence="1"/>
<dbReference type="EMBL" id="BX950851">
    <property type="protein sequence ID" value="CAG76729.1"/>
    <property type="molecule type" value="Genomic_DNA"/>
</dbReference>
<dbReference type="RefSeq" id="WP_011095329.1">
    <property type="nucleotide sequence ID" value="NC_004547.2"/>
</dbReference>
<dbReference type="SMR" id="Q6D0G8"/>
<dbReference type="STRING" id="218491.ECA3831"/>
<dbReference type="KEGG" id="eca:ECA3831"/>
<dbReference type="PATRIC" id="fig|218491.5.peg.3886"/>
<dbReference type="eggNOG" id="COG0119">
    <property type="taxonomic scope" value="Bacteria"/>
</dbReference>
<dbReference type="HOGENOM" id="CLU_022158_0_1_6"/>
<dbReference type="OrthoDB" id="9803573at2"/>
<dbReference type="UniPathway" id="UPA00048">
    <property type="reaction ID" value="UER00070"/>
</dbReference>
<dbReference type="Proteomes" id="UP000007966">
    <property type="component" value="Chromosome"/>
</dbReference>
<dbReference type="GO" id="GO:0005829">
    <property type="term" value="C:cytosol"/>
    <property type="evidence" value="ECO:0007669"/>
    <property type="project" value="TreeGrafter"/>
</dbReference>
<dbReference type="GO" id="GO:0003852">
    <property type="term" value="F:2-isopropylmalate synthase activity"/>
    <property type="evidence" value="ECO:0007669"/>
    <property type="project" value="UniProtKB-UniRule"/>
</dbReference>
<dbReference type="GO" id="GO:0003985">
    <property type="term" value="F:acetyl-CoA C-acetyltransferase activity"/>
    <property type="evidence" value="ECO:0007669"/>
    <property type="project" value="UniProtKB-UniRule"/>
</dbReference>
<dbReference type="GO" id="GO:0030145">
    <property type="term" value="F:manganese ion binding"/>
    <property type="evidence" value="ECO:0007669"/>
    <property type="project" value="UniProtKB-UniRule"/>
</dbReference>
<dbReference type="GO" id="GO:0009098">
    <property type="term" value="P:L-leucine biosynthetic process"/>
    <property type="evidence" value="ECO:0007669"/>
    <property type="project" value="UniProtKB-UniRule"/>
</dbReference>
<dbReference type="CDD" id="cd07940">
    <property type="entry name" value="DRE_TIM_IPMS"/>
    <property type="match status" value="1"/>
</dbReference>
<dbReference type="FunFam" id="1.10.238.260:FF:000001">
    <property type="entry name" value="2-isopropylmalate synthase"/>
    <property type="match status" value="1"/>
</dbReference>
<dbReference type="FunFam" id="3.20.20.70:FF:000010">
    <property type="entry name" value="2-isopropylmalate synthase"/>
    <property type="match status" value="1"/>
</dbReference>
<dbReference type="FunFam" id="3.30.160.270:FF:000001">
    <property type="entry name" value="2-isopropylmalate synthase"/>
    <property type="match status" value="1"/>
</dbReference>
<dbReference type="Gene3D" id="1.10.238.260">
    <property type="match status" value="1"/>
</dbReference>
<dbReference type="Gene3D" id="3.30.160.270">
    <property type="match status" value="1"/>
</dbReference>
<dbReference type="Gene3D" id="3.20.20.70">
    <property type="entry name" value="Aldolase class I"/>
    <property type="match status" value="1"/>
</dbReference>
<dbReference type="HAMAP" id="MF_01025">
    <property type="entry name" value="LeuA_type1"/>
    <property type="match status" value="1"/>
</dbReference>
<dbReference type="InterPro" id="IPR050073">
    <property type="entry name" value="2-IPM_HCS-like"/>
</dbReference>
<dbReference type="InterPro" id="IPR013709">
    <property type="entry name" value="2-isopropylmalate_synth_dimer"/>
</dbReference>
<dbReference type="InterPro" id="IPR002034">
    <property type="entry name" value="AIPM/Hcit_synth_CS"/>
</dbReference>
<dbReference type="InterPro" id="IPR013785">
    <property type="entry name" value="Aldolase_TIM"/>
</dbReference>
<dbReference type="InterPro" id="IPR054691">
    <property type="entry name" value="LeuA/HCS_post-cat"/>
</dbReference>
<dbReference type="InterPro" id="IPR036230">
    <property type="entry name" value="LeuA_allosteric_dom_sf"/>
</dbReference>
<dbReference type="InterPro" id="IPR005671">
    <property type="entry name" value="LeuA_bact_synth"/>
</dbReference>
<dbReference type="InterPro" id="IPR000891">
    <property type="entry name" value="PYR_CT"/>
</dbReference>
<dbReference type="NCBIfam" id="TIGR00973">
    <property type="entry name" value="leuA_bact"/>
    <property type="match status" value="1"/>
</dbReference>
<dbReference type="NCBIfam" id="NF002084">
    <property type="entry name" value="PRK00915.1-1"/>
    <property type="match status" value="1"/>
</dbReference>
<dbReference type="NCBIfam" id="NF002086">
    <property type="entry name" value="PRK00915.1-3"/>
    <property type="match status" value="1"/>
</dbReference>
<dbReference type="PANTHER" id="PTHR10277:SF9">
    <property type="entry name" value="2-ISOPROPYLMALATE SYNTHASE 1, CHLOROPLASTIC-RELATED"/>
    <property type="match status" value="1"/>
</dbReference>
<dbReference type="PANTHER" id="PTHR10277">
    <property type="entry name" value="HOMOCITRATE SYNTHASE-RELATED"/>
    <property type="match status" value="1"/>
</dbReference>
<dbReference type="Pfam" id="PF22617">
    <property type="entry name" value="HCS_D2"/>
    <property type="match status" value="1"/>
</dbReference>
<dbReference type="Pfam" id="PF00682">
    <property type="entry name" value="HMGL-like"/>
    <property type="match status" value="1"/>
</dbReference>
<dbReference type="Pfam" id="PF08502">
    <property type="entry name" value="LeuA_dimer"/>
    <property type="match status" value="1"/>
</dbReference>
<dbReference type="SMART" id="SM00917">
    <property type="entry name" value="LeuA_dimer"/>
    <property type="match status" value="1"/>
</dbReference>
<dbReference type="SUPFAM" id="SSF110921">
    <property type="entry name" value="2-isopropylmalate synthase LeuA, allosteric (dimerisation) domain"/>
    <property type="match status" value="1"/>
</dbReference>
<dbReference type="SUPFAM" id="SSF51569">
    <property type="entry name" value="Aldolase"/>
    <property type="match status" value="1"/>
</dbReference>
<dbReference type="PROSITE" id="PS00815">
    <property type="entry name" value="AIPM_HOMOCIT_SYNTH_1"/>
    <property type="match status" value="1"/>
</dbReference>
<dbReference type="PROSITE" id="PS00816">
    <property type="entry name" value="AIPM_HOMOCIT_SYNTH_2"/>
    <property type="match status" value="1"/>
</dbReference>
<dbReference type="PROSITE" id="PS50991">
    <property type="entry name" value="PYR_CT"/>
    <property type="match status" value="1"/>
</dbReference>
<keyword id="KW-0028">Amino-acid biosynthesis</keyword>
<keyword id="KW-0100">Branched-chain amino acid biosynthesis</keyword>
<keyword id="KW-0963">Cytoplasm</keyword>
<keyword id="KW-0432">Leucine biosynthesis</keyword>
<keyword id="KW-0464">Manganese</keyword>
<keyword id="KW-0479">Metal-binding</keyword>
<keyword id="KW-1185">Reference proteome</keyword>
<keyword id="KW-0808">Transferase</keyword>